<name>CCR4_ASPNC</name>
<gene>
    <name type="primary">ccr4</name>
    <name type="ORF">An01g08240</name>
</gene>
<protein>
    <recommendedName>
        <fullName evidence="5">CCR4-Not complex 3'-5'-exoribonuclease subunit Ccr4</fullName>
        <ecNumber>3.1.13.4</ecNumber>
    </recommendedName>
    <alternativeName>
        <fullName>Carbon catabolite repressor protein 4</fullName>
    </alternativeName>
    <alternativeName>
        <fullName>Cytoplasmic deadenylase</fullName>
    </alternativeName>
    <alternativeName>
        <fullName>Glucose-repressible alcohol dehydrogenase transcriptional effector</fullName>
    </alternativeName>
</protein>
<feature type="chain" id="PRO_0000290604" description="CCR4-Not complex 3'-5'-exoribonuclease subunit Ccr4">
    <location>
        <begin position="1"/>
        <end position="656"/>
    </location>
</feature>
<feature type="repeat" description="LRR 1">
    <location>
        <begin position="169"/>
        <end position="190"/>
    </location>
</feature>
<feature type="repeat" description="LRR 2">
    <location>
        <begin position="192"/>
        <end position="213"/>
    </location>
</feature>
<feature type="repeat" description="LRR 3">
    <location>
        <begin position="215"/>
        <end position="236"/>
    </location>
</feature>
<feature type="repeat" description="LRR 4">
    <location>
        <begin position="238"/>
        <end position="259"/>
    </location>
</feature>
<feature type="region of interest" description="Disordered" evidence="4">
    <location>
        <begin position="18"/>
        <end position="42"/>
    </location>
</feature>
<feature type="region of interest" description="Disordered" evidence="4">
    <location>
        <begin position="116"/>
        <end position="141"/>
    </location>
</feature>
<feature type="compositionally biased region" description="Basic residues" evidence="4">
    <location>
        <begin position="22"/>
        <end position="38"/>
    </location>
</feature>
<feature type="compositionally biased region" description="Polar residues" evidence="4">
    <location>
        <begin position="116"/>
        <end position="131"/>
    </location>
</feature>
<feature type="binding site" evidence="2">
    <location>
        <position position="352"/>
    </location>
    <ligand>
        <name>Mg(2+)</name>
        <dbReference type="ChEBI" id="CHEBI:18420"/>
    </ligand>
</feature>
<evidence type="ECO:0000250" key="1"/>
<evidence type="ECO:0000250" key="2">
    <source>
        <dbReference type="UniProtKB" id="O95551"/>
    </source>
</evidence>
<evidence type="ECO:0000250" key="3">
    <source>
        <dbReference type="UniProtKB" id="P31384"/>
    </source>
</evidence>
<evidence type="ECO:0000256" key="4">
    <source>
        <dbReference type="SAM" id="MobiDB-lite"/>
    </source>
</evidence>
<evidence type="ECO:0000305" key="5"/>
<keyword id="KW-0010">Activator</keyword>
<keyword id="KW-0963">Cytoplasm</keyword>
<keyword id="KW-0269">Exonuclease</keyword>
<keyword id="KW-0378">Hydrolase</keyword>
<keyword id="KW-0433">Leucine-rich repeat</keyword>
<keyword id="KW-0460">Magnesium</keyword>
<keyword id="KW-0479">Metal-binding</keyword>
<keyword id="KW-0540">Nuclease</keyword>
<keyword id="KW-0539">Nucleus</keyword>
<keyword id="KW-1185">Reference proteome</keyword>
<keyword id="KW-0677">Repeat</keyword>
<keyword id="KW-0678">Repressor</keyword>
<keyword id="KW-0694">RNA-binding</keyword>
<keyword id="KW-0804">Transcription</keyword>
<keyword id="KW-0805">Transcription regulation</keyword>
<sequence>MNGGQAHQRFGMQIPKFQSQSHHPHPAQQAHHHAHHNQASHSINHQHNFSSGALAAATPHFTPGPLQNGAHVNVDEDIDETMNEHWQQQLQLAAESRQASSPHYYARTVAQQTKGIQIAPSQPESQENGSGDRNGLVKSKPAPRQGWHALDFGGQGLRALATSLFHYTFLEKLYLNHNKLKTLPPAIGQLRKLTHLDLSSNDISELPEEIGMLTSLKQLLLFDNNIRTLPFEMGYLYRLEMLGIEGNPLNDVLKSQIIKEGTKALVRYLREEMPVHLPPPDRDWIILDETASSSNSPTEKITVLSHNALCDSSATPSHFGYTPSRVLSWEFRRELILSELRSHDSDIICLQEIDQGSYNGFFREQLAYNDYKGVYWPRGRAMGMQEEEAKSVDGCATFFKGSKFILLDKQMINFGQTAVRRPDAKGQDDIYNRLWQKDHIAVVIFLENRLTGSRFIVVNAHLYWDPAFKDVKLIQTAILMEEITKLSEKYAKFPPCTDKTAFRFSEAEVEYASGDQIPLFMCGDFNSAPGSAAYNLVAHGRLTESHPDLEKRLYGNLSRVGMTHPFKLKSAYNSIGELSFTNYTPDFKDILDYIWYTSNTLHVSALLGEVDKEYLQKVPGFPNFHFPSDHVALFAEFTVKGKKGKVVEADFGPQRN</sequence>
<comment type="function">
    <text evidence="3">Acts as a catalytic component of the CCR4-NOT core complex, which in the nucleus seems to be a general transcription factor, and in the cytoplasm the major mRNA deadenylase involved in mRNA turnover (By similarity). Ccr4 has 3'-5' RNase activity with a strong preference for polyadenylated substrates and also low exonuclease activity towards single-stranded DNA (By similarity).</text>
</comment>
<comment type="catalytic activity">
    <reaction>
        <text>Exonucleolytic cleavage of poly(A) to 5'-AMP.</text>
        <dbReference type="EC" id="3.1.13.4"/>
    </reaction>
</comment>
<comment type="cofactor">
    <cofactor evidence="1">
        <name>Mg(2+)</name>
        <dbReference type="ChEBI" id="CHEBI:18420"/>
    </cofactor>
</comment>
<comment type="subcellular location">
    <subcellularLocation>
        <location evidence="1">Cytoplasm</location>
    </subcellularLocation>
    <subcellularLocation>
        <location evidence="1">Nucleus</location>
    </subcellularLocation>
</comment>
<comment type="similarity">
    <text evidence="5">Belongs to the CCR4/nocturin family.</text>
</comment>
<reference key="1">
    <citation type="journal article" date="2007" name="Nat. Biotechnol.">
        <title>Genome sequencing and analysis of the versatile cell factory Aspergillus niger CBS 513.88.</title>
        <authorList>
            <person name="Pel H.J."/>
            <person name="de Winde J.H."/>
            <person name="Archer D.B."/>
            <person name="Dyer P.S."/>
            <person name="Hofmann G."/>
            <person name="Schaap P.J."/>
            <person name="Turner G."/>
            <person name="de Vries R.P."/>
            <person name="Albang R."/>
            <person name="Albermann K."/>
            <person name="Andersen M.R."/>
            <person name="Bendtsen J.D."/>
            <person name="Benen J.A.E."/>
            <person name="van den Berg M."/>
            <person name="Breestraat S."/>
            <person name="Caddick M.X."/>
            <person name="Contreras R."/>
            <person name="Cornell M."/>
            <person name="Coutinho P.M."/>
            <person name="Danchin E.G.J."/>
            <person name="Debets A.J.M."/>
            <person name="Dekker P."/>
            <person name="van Dijck P.W.M."/>
            <person name="van Dijk A."/>
            <person name="Dijkhuizen L."/>
            <person name="Driessen A.J.M."/>
            <person name="d'Enfert C."/>
            <person name="Geysens S."/>
            <person name="Goosen C."/>
            <person name="Groot G.S.P."/>
            <person name="de Groot P.W.J."/>
            <person name="Guillemette T."/>
            <person name="Henrissat B."/>
            <person name="Herweijer M."/>
            <person name="van den Hombergh J.P.T.W."/>
            <person name="van den Hondel C.A.M.J.J."/>
            <person name="van der Heijden R.T.J.M."/>
            <person name="van der Kaaij R.M."/>
            <person name="Klis F.M."/>
            <person name="Kools H.J."/>
            <person name="Kubicek C.P."/>
            <person name="van Kuyk P.A."/>
            <person name="Lauber J."/>
            <person name="Lu X."/>
            <person name="van der Maarel M.J.E.C."/>
            <person name="Meulenberg R."/>
            <person name="Menke H."/>
            <person name="Mortimer M.A."/>
            <person name="Nielsen J."/>
            <person name="Oliver S.G."/>
            <person name="Olsthoorn M."/>
            <person name="Pal K."/>
            <person name="van Peij N.N.M.E."/>
            <person name="Ram A.F.J."/>
            <person name="Rinas U."/>
            <person name="Roubos J.A."/>
            <person name="Sagt C.M.J."/>
            <person name="Schmoll M."/>
            <person name="Sun J."/>
            <person name="Ussery D."/>
            <person name="Varga J."/>
            <person name="Vervecken W."/>
            <person name="van de Vondervoort P.J.J."/>
            <person name="Wedler H."/>
            <person name="Woesten H.A.B."/>
            <person name="Zeng A.-P."/>
            <person name="van Ooyen A.J.J."/>
            <person name="Visser J."/>
            <person name="Stam H."/>
        </authorList>
    </citation>
    <scope>NUCLEOTIDE SEQUENCE [LARGE SCALE GENOMIC DNA]</scope>
    <source>
        <strain>ATCC MYA-4892 / CBS 513.88 / FGSC A1513</strain>
    </source>
</reference>
<accession>A2Q9L0</accession>
<proteinExistence type="inferred from homology"/>
<dbReference type="EC" id="3.1.13.4"/>
<dbReference type="EMBL" id="AM269976">
    <property type="protein sequence ID" value="CAK43916.1"/>
    <property type="molecule type" value="Genomic_DNA"/>
</dbReference>
<dbReference type="SMR" id="A2Q9L0"/>
<dbReference type="EnsemblFungi" id="CAK43916">
    <property type="protein sequence ID" value="CAK43916"/>
    <property type="gene ID" value="An01g08240"/>
</dbReference>
<dbReference type="VEuPathDB" id="FungiDB:An01g08240"/>
<dbReference type="HOGENOM" id="CLU_016428_4_0_1"/>
<dbReference type="Proteomes" id="UP000006706">
    <property type="component" value="Chromosome 2R"/>
</dbReference>
<dbReference type="GO" id="GO:0030015">
    <property type="term" value="C:CCR4-NOT core complex"/>
    <property type="evidence" value="ECO:0007669"/>
    <property type="project" value="EnsemblFungi"/>
</dbReference>
<dbReference type="GO" id="GO:0016593">
    <property type="term" value="C:Cdc73/Paf1 complex"/>
    <property type="evidence" value="ECO:0007669"/>
    <property type="project" value="EnsemblFungi"/>
</dbReference>
<dbReference type="GO" id="GO:0000932">
    <property type="term" value="C:P-body"/>
    <property type="evidence" value="ECO:0007669"/>
    <property type="project" value="EnsemblFungi"/>
</dbReference>
<dbReference type="GO" id="GO:0046872">
    <property type="term" value="F:metal ion binding"/>
    <property type="evidence" value="ECO:0007669"/>
    <property type="project" value="UniProtKB-KW"/>
</dbReference>
<dbReference type="GO" id="GO:0004535">
    <property type="term" value="F:poly(A)-specific ribonuclease activity"/>
    <property type="evidence" value="ECO:0007669"/>
    <property type="project" value="UniProtKB-EC"/>
</dbReference>
<dbReference type="GO" id="GO:0003723">
    <property type="term" value="F:RNA binding"/>
    <property type="evidence" value="ECO:0007669"/>
    <property type="project" value="UniProtKB-KW"/>
</dbReference>
<dbReference type="GO" id="GO:0006260">
    <property type="term" value="P:DNA replication"/>
    <property type="evidence" value="ECO:0007669"/>
    <property type="project" value="EnsemblFungi"/>
</dbReference>
<dbReference type="GO" id="GO:0000076">
    <property type="term" value="P:DNA replication checkpoint signaling"/>
    <property type="evidence" value="ECO:0007669"/>
    <property type="project" value="EnsemblFungi"/>
</dbReference>
<dbReference type="GO" id="GO:0000289">
    <property type="term" value="P:nuclear-transcribed mRNA poly(A) tail shortening"/>
    <property type="evidence" value="ECO:0007669"/>
    <property type="project" value="EnsemblFungi"/>
</dbReference>
<dbReference type="GO" id="GO:0032968">
    <property type="term" value="P:positive regulation of transcription elongation by RNA polymerase II"/>
    <property type="evidence" value="ECO:0007669"/>
    <property type="project" value="EnsemblFungi"/>
</dbReference>
<dbReference type="GO" id="GO:0006368">
    <property type="term" value="P:transcription elongation by RNA polymerase II"/>
    <property type="evidence" value="ECO:0007669"/>
    <property type="project" value="EnsemblFungi"/>
</dbReference>
<dbReference type="GO" id="GO:0007089">
    <property type="term" value="P:traversing start control point of mitotic cell cycle"/>
    <property type="evidence" value="ECO:0007669"/>
    <property type="project" value="EnsemblFungi"/>
</dbReference>
<dbReference type="CDD" id="cd09097">
    <property type="entry name" value="Deadenylase_CCR4"/>
    <property type="match status" value="1"/>
</dbReference>
<dbReference type="FunFam" id="3.60.10.10:FF:000037">
    <property type="entry name" value="Glucose-repressible alcohol dehydrogenase transcriptional effector"/>
    <property type="match status" value="1"/>
</dbReference>
<dbReference type="FunFam" id="3.80.10.10:FF:000447">
    <property type="entry name" value="Glucose-repressible alcohol dehydrogenase transcriptional effector"/>
    <property type="match status" value="1"/>
</dbReference>
<dbReference type="Gene3D" id="3.60.10.10">
    <property type="entry name" value="Endonuclease/exonuclease/phosphatase"/>
    <property type="match status" value="1"/>
</dbReference>
<dbReference type="Gene3D" id="3.80.10.10">
    <property type="entry name" value="Ribonuclease Inhibitor"/>
    <property type="match status" value="1"/>
</dbReference>
<dbReference type="InterPro" id="IPR050410">
    <property type="entry name" value="CCR4/nocturin_mRNA_transcr"/>
</dbReference>
<dbReference type="InterPro" id="IPR036691">
    <property type="entry name" value="Endo/exonu/phosph_ase_sf"/>
</dbReference>
<dbReference type="InterPro" id="IPR005135">
    <property type="entry name" value="Endo/exonuclease/phosphatase"/>
</dbReference>
<dbReference type="InterPro" id="IPR001611">
    <property type="entry name" value="Leu-rich_rpt"/>
</dbReference>
<dbReference type="InterPro" id="IPR003591">
    <property type="entry name" value="Leu-rich_rpt_typical-subtyp"/>
</dbReference>
<dbReference type="InterPro" id="IPR032675">
    <property type="entry name" value="LRR_dom_sf"/>
</dbReference>
<dbReference type="PANTHER" id="PTHR12121">
    <property type="entry name" value="CARBON CATABOLITE REPRESSOR PROTEIN 4"/>
    <property type="match status" value="1"/>
</dbReference>
<dbReference type="PANTHER" id="PTHR12121:SF100">
    <property type="entry name" value="POLY(A)-SPECIFIC RIBONUCLEASE"/>
    <property type="match status" value="1"/>
</dbReference>
<dbReference type="Pfam" id="PF03372">
    <property type="entry name" value="Exo_endo_phos"/>
    <property type="match status" value="1"/>
</dbReference>
<dbReference type="Pfam" id="PF13855">
    <property type="entry name" value="LRR_8"/>
    <property type="match status" value="1"/>
</dbReference>
<dbReference type="SMART" id="SM00369">
    <property type="entry name" value="LRR_TYP"/>
    <property type="match status" value="3"/>
</dbReference>
<dbReference type="SUPFAM" id="SSF56219">
    <property type="entry name" value="DNase I-like"/>
    <property type="match status" value="1"/>
</dbReference>
<dbReference type="SUPFAM" id="SSF52058">
    <property type="entry name" value="L domain-like"/>
    <property type="match status" value="1"/>
</dbReference>
<dbReference type="PROSITE" id="PS51450">
    <property type="entry name" value="LRR"/>
    <property type="match status" value="3"/>
</dbReference>
<organism>
    <name type="scientific">Aspergillus niger (strain ATCC MYA-4892 / CBS 513.88 / FGSC A1513)</name>
    <dbReference type="NCBI Taxonomy" id="425011"/>
    <lineage>
        <taxon>Eukaryota</taxon>
        <taxon>Fungi</taxon>
        <taxon>Dikarya</taxon>
        <taxon>Ascomycota</taxon>
        <taxon>Pezizomycotina</taxon>
        <taxon>Eurotiomycetes</taxon>
        <taxon>Eurotiomycetidae</taxon>
        <taxon>Eurotiales</taxon>
        <taxon>Aspergillaceae</taxon>
        <taxon>Aspergillus</taxon>
        <taxon>Aspergillus subgen. Circumdati</taxon>
    </lineage>
</organism>